<organism>
    <name type="scientific">Sulfurovum sp. (strain NBC37-1)</name>
    <dbReference type="NCBI Taxonomy" id="387093"/>
    <lineage>
        <taxon>Bacteria</taxon>
        <taxon>Pseudomonadati</taxon>
        <taxon>Campylobacterota</taxon>
        <taxon>Epsilonproteobacteria</taxon>
        <taxon>Campylobacterales</taxon>
        <taxon>Sulfurovaceae</taxon>
        <taxon>Sulfurovum</taxon>
    </lineage>
</organism>
<comment type="function">
    <text evidence="1">Binds directly to 16S ribosomal RNA.</text>
</comment>
<comment type="similarity">
    <text evidence="1">Belongs to the bacterial ribosomal protein bS20 family.</text>
</comment>
<proteinExistence type="inferred from homology"/>
<name>RS20_SULNB</name>
<evidence type="ECO:0000255" key="1">
    <source>
        <dbReference type="HAMAP-Rule" id="MF_00500"/>
    </source>
</evidence>
<evidence type="ECO:0000305" key="2"/>
<sequence>MAHHKSAKKRILQTAKRTERNRYYRTRIKNITKAVHEAVEAADMTAAQEAFKVANKQIHSLVSKGFIKKATAARKVSRLHKMVNKIEAA</sequence>
<accession>A6Q6B5</accession>
<reference key="1">
    <citation type="journal article" date="2007" name="Proc. Natl. Acad. Sci. U.S.A.">
        <title>Deep-sea vent epsilon-proteobacterial genomes provide insights into emergence of pathogens.</title>
        <authorList>
            <person name="Nakagawa S."/>
            <person name="Takaki Y."/>
            <person name="Shimamura S."/>
            <person name="Reysenbach A.-L."/>
            <person name="Takai K."/>
            <person name="Horikoshi K."/>
        </authorList>
    </citation>
    <scope>NUCLEOTIDE SEQUENCE [LARGE SCALE GENOMIC DNA]</scope>
    <source>
        <strain>NBC37-1</strain>
    </source>
</reference>
<keyword id="KW-0687">Ribonucleoprotein</keyword>
<keyword id="KW-0689">Ribosomal protein</keyword>
<keyword id="KW-0694">RNA-binding</keyword>
<keyword id="KW-0699">rRNA-binding</keyword>
<dbReference type="EMBL" id="AP009179">
    <property type="protein sequence ID" value="BAF71024.1"/>
    <property type="molecule type" value="Genomic_DNA"/>
</dbReference>
<dbReference type="RefSeq" id="WP_011979757.1">
    <property type="nucleotide sequence ID" value="NC_009663.1"/>
</dbReference>
<dbReference type="SMR" id="A6Q6B5"/>
<dbReference type="STRING" id="387093.SUN_0064"/>
<dbReference type="KEGG" id="sun:SUN_0064"/>
<dbReference type="eggNOG" id="COG0268">
    <property type="taxonomic scope" value="Bacteria"/>
</dbReference>
<dbReference type="HOGENOM" id="CLU_160655_3_0_7"/>
<dbReference type="OrthoDB" id="9807974at2"/>
<dbReference type="Proteomes" id="UP000006378">
    <property type="component" value="Chromosome"/>
</dbReference>
<dbReference type="GO" id="GO:0005829">
    <property type="term" value="C:cytosol"/>
    <property type="evidence" value="ECO:0007669"/>
    <property type="project" value="TreeGrafter"/>
</dbReference>
<dbReference type="GO" id="GO:0015935">
    <property type="term" value="C:small ribosomal subunit"/>
    <property type="evidence" value="ECO:0007669"/>
    <property type="project" value="TreeGrafter"/>
</dbReference>
<dbReference type="GO" id="GO:0070181">
    <property type="term" value="F:small ribosomal subunit rRNA binding"/>
    <property type="evidence" value="ECO:0007669"/>
    <property type="project" value="TreeGrafter"/>
</dbReference>
<dbReference type="GO" id="GO:0003735">
    <property type="term" value="F:structural constituent of ribosome"/>
    <property type="evidence" value="ECO:0007669"/>
    <property type="project" value="InterPro"/>
</dbReference>
<dbReference type="GO" id="GO:0006412">
    <property type="term" value="P:translation"/>
    <property type="evidence" value="ECO:0007669"/>
    <property type="project" value="UniProtKB-UniRule"/>
</dbReference>
<dbReference type="FunFam" id="1.20.58.110:FF:000001">
    <property type="entry name" value="30S ribosomal protein S20"/>
    <property type="match status" value="1"/>
</dbReference>
<dbReference type="Gene3D" id="1.20.58.110">
    <property type="entry name" value="Ribosomal protein S20"/>
    <property type="match status" value="1"/>
</dbReference>
<dbReference type="HAMAP" id="MF_00500">
    <property type="entry name" value="Ribosomal_bS20"/>
    <property type="match status" value="1"/>
</dbReference>
<dbReference type="InterPro" id="IPR002583">
    <property type="entry name" value="Ribosomal_bS20"/>
</dbReference>
<dbReference type="InterPro" id="IPR036510">
    <property type="entry name" value="Ribosomal_bS20_sf"/>
</dbReference>
<dbReference type="NCBIfam" id="TIGR00029">
    <property type="entry name" value="S20"/>
    <property type="match status" value="1"/>
</dbReference>
<dbReference type="PANTHER" id="PTHR33398">
    <property type="entry name" value="30S RIBOSOMAL PROTEIN S20"/>
    <property type="match status" value="1"/>
</dbReference>
<dbReference type="PANTHER" id="PTHR33398:SF1">
    <property type="entry name" value="SMALL RIBOSOMAL SUBUNIT PROTEIN BS20C"/>
    <property type="match status" value="1"/>
</dbReference>
<dbReference type="Pfam" id="PF01649">
    <property type="entry name" value="Ribosomal_S20p"/>
    <property type="match status" value="1"/>
</dbReference>
<dbReference type="SUPFAM" id="SSF46992">
    <property type="entry name" value="Ribosomal protein S20"/>
    <property type="match status" value="1"/>
</dbReference>
<protein>
    <recommendedName>
        <fullName evidence="1">Small ribosomal subunit protein bS20</fullName>
    </recommendedName>
    <alternativeName>
        <fullName evidence="2">30S ribosomal protein S20</fullName>
    </alternativeName>
</protein>
<gene>
    <name evidence="1" type="primary">rpsT</name>
    <name type="ordered locus">SUN_0064</name>
</gene>
<feature type="chain" id="PRO_1000014666" description="Small ribosomal subunit protein bS20">
    <location>
        <begin position="1"/>
        <end position="89"/>
    </location>
</feature>